<gene>
    <name type="ORF">v1g180167</name>
</gene>
<proteinExistence type="inferred from homology"/>
<protein>
    <recommendedName>
        <fullName>Coiled-coil domain-containing protein 22 homolog</fullName>
    </recommendedName>
</protein>
<name>CCD22_NEMVE</name>
<sequence length="644" mass="73226">MEEVDNIIIHTLRQIGCEIPEEIQSLREFTTTVIVQASSKCLHVINEDIDIPSNLPSSMSAKFRVGTMLAAALQDLGYRGEIGYQTFLYSNEKDIRSVFMFLVEHLPKETSLAASEPLGSSVLLNRRVASDLAQRLTLSWTPTFLKKGGVRWKGSKPKTYFREGSASMRRFHACNLKSPQGLTDLTAKISKETKAYYSVIPYVTSQPPCRQDVVPSVLESNSLSVTAVAEWELEWNQSGLSSRLTKEEYLARKRQRLEKKIKDHVLAEMQRVEAGGRAASDLSDIVSSFSDRVSTIESQTQGSRFTRTEKLQFAQDEQKAAAMAGLSESGPPKMDTEEELQKKREQELEALQNKLKDLASSVDEKKSEIKTMNAGLQQTNEQVTATKVQNSEHEESYKVKKRTVDLLPDAENNIAKLQGVVDSSSQRLVNLAQQWETHRTALIDEYRELKVINANKVSETQKKLEEIKSLREKMKEVAEETRGKDDLYKQLVSEYERMSRDVNRSAYTRRILEIVGNIKKQKEEINKILVDTKSVQKEINQLSGKLDRTFTVTDELIFRDAKKDEACRKAYKYLASLHENCKELIQAVEDTGVIMREIRDLEEQIDTESQRNTANNLERITADHKQMKEENATLTKKIKALKSS</sequence>
<keyword id="KW-0175">Coiled coil</keyword>
<keyword id="KW-1185">Reference proteome</keyword>
<accession>A7RNG8</accession>
<organism>
    <name type="scientific">Nematostella vectensis</name>
    <name type="common">Starlet sea anemone</name>
    <dbReference type="NCBI Taxonomy" id="45351"/>
    <lineage>
        <taxon>Eukaryota</taxon>
        <taxon>Metazoa</taxon>
        <taxon>Cnidaria</taxon>
        <taxon>Anthozoa</taxon>
        <taxon>Hexacorallia</taxon>
        <taxon>Actiniaria</taxon>
        <taxon>Edwardsiidae</taxon>
        <taxon>Nematostella</taxon>
    </lineage>
</organism>
<comment type="similarity">
    <text evidence="3">Belongs to the CCDC22 family.</text>
</comment>
<evidence type="ECO:0000255" key="1"/>
<evidence type="ECO:0000256" key="2">
    <source>
        <dbReference type="SAM" id="MobiDB-lite"/>
    </source>
</evidence>
<evidence type="ECO:0000305" key="3"/>
<feature type="chain" id="PRO_0000338404" description="Coiled-coil domain-containing protein 22 homolog">
    <location>
        <begin position="1"/>
        <end position="644"/>
    </location>
</feature>
<feature type="region of interest" description="Disordered" evidence="2">
    <location>
        <begin position="316"/>
        <end position="341"/>
    </location>
</feature>
<feature type="coiled-coil region" evidence="1">
    <location>
        <begin position="333"/>
        <end position="383"/>
    </location>
</feature>
<feature type="coiled-coil region" evidence="1">
    <location>
        <begin position="409"/>
        <end position="486"/>
    </location>
</feature>
<feature type="coiled-coil region" evidence="1">
    <location>
        <begin position="592"/>
        <end position="644"/>
    </location>
</feature>
<dbReference type="EMBL" id="DS469522">
    <property type="protein sequence ID" value="EDO47059.1"/>
    <property type="molecule type" value="Genomic_DNA"/>
</dbReference>
<dbReference type="RefSeq" id="XP_001639122.1">
    <property type="nucleotide sequence ID" value="XM_001639072.1"/>
</dbReference>
<dbReference type="SMR" id="A7RNG8"/>
<dbReference type="STRING" id="45351.A7RNG8"/>
<dbReference type="EnsemblMetazoa" id="EDO47059">
    <property type="protein sequence ID" value="EDO47059"/>
    <property type="gene ID" value="NEMVEDRAFT_v1g180167"/>
</dbReference>
<dbReference type="KEGG" id="nve:5519222"/>
<dbReference type="eggNOG" id="KOG1937">
    <property type="taxonomic scope" value="Eukaryota"/>
</dbReference>
<dbReference type="HOGENOM" id="CLU_024231_1_0_1"/>
<dbReference type="InParanoid" id="A7RNG8"/>
<dbReference type="OMA" id="KFEQHIQ"/>
<dbReference type="OrthoDB" id="10266736at2759"/>
<dbReference type="PhylomeDB" id="A7RNG8"/>
<dbReference type="Proteomes" id="UP000001593">
    <property type="component" value="Unassembled WGS sequence"/>
</dbReference>
<dbReference type="GO" id="GO:0097602">
    <property type="term" value="F:cullin family protein binding"/>
    <property type="evidence" value="ECO:0000318"/>
    <property type="project" value="GO_Central"/>
</dbReference>
<dbReference type="GO" id="GO:2000060">
    <property type="term" value="P:positive regulation of ubiquitin-dependent protein catabolic process"/>
    <property type="evidence" value="ECO:0000318"/>
    <property type="project" value="GO_Central"/>
</dbReference>
<dbReference type="InterPro" id="IPR008530">
    <property type="entry name" value="CCDC22"/>
</dbReference>
<dbReference type="InterPro" id="IPR048348">
    <property type="entry name" value="CCDC22_CC"/>
</dbReference>
<dbReference type="InterPro" id="IPR048349">
    <property type="entry name" value="CCDC22_N"/>
</dbReference>
<dbReference type="PANTHER" id="PTHR15668:SF4">
    <property type="entry name" value="COILED-COIL DOMAIN-CONTAINING PROTEIN 22"/>
    <property type="match status" value="1"/>
</dbReference>
<dbReference type="PANTHER" id="PTHR15668">
    <property type="entry name" value="JM1 PROTEIN"/>
    <property type="match status" value="1"/>
</dbReference>
<dbReference type="Pfam" id="PF05667">
    <property type="entry name" value="CCDC22_CC"/>
    <property type="match status" value="1"/>
</dbReference>
<dbReference type="Pfam" id="PF21674">
    <property type="entry name" value="CCDC22_N"/>
    <property type="match status" value="1"/>
</dbReference>
<reference key="1">
    <citation type="journal article" date="2007" name="Science">
        <title>Sea anemone genome reveals ancestral eumetazoan gene repertoire and genomic organization.</title>
        <authorList>
            <person name="Putnam N.H."/>
            <person name="Srivastava M."/>
            <person name="Hellsten U."/>
            <person name="Dirks B."/>
            <person name="Chapman J."/>
            <person name="Salamov A."/>
            <person name="Terry A."/>
            <person name="Shapiro H."/>
            <person name="Lindquist E."/>
            <person name="Kapitonov V.V."/>
            <person name="Jurka J."/>
            <person name="Genikhovich G."/>
            <person name="Grigoriev I.V."/>
            <person name="Lucas S.M."/>
            <person name="Steele R.E."/>
            <person name="Finnerty J.R."/>
            <person name="Technau U."/>
            <person name="Martindale M.Q."/>
            <person name="Rokhsar D.S."/>
        </authorList>
    </citation>
    <scope>NUCLEOTIDE SEQUENCE [LARGE SCALE GENOMIC DNA]</scope>
    <source>
        <strain>CH2 X CH6</strain>
    </source>
</reference>